<evidence type="ECO:0000250" key="1">
    <source>
        <dbReference type="UniProtKB" id="Q9ULX9"/>
    </source>
</evidence>
<evidence type="ECO:0000255" key="2">
    <source>
        <dbReference type="PROSITE-ProRule" id="PRU00978"/>
    </source>
</evidence>
<evidence type="ECO:0000256" key="3">
    <source>
        <dbReference type="SAM" id="MobiDB-lite"/>
    </source>
</evidence>
<evidence type="ECO:0000305" key="4"/>
<feature type="chain" id="PRO_0000350813" description="Transcription factor MafF">
    <location>
        <begin position="1"/>
        <end position="172"/>
    </location>
</feature>
<feature type="domain" description="bZIP" evidence="2">
    <location>
        <begin position="51"/>
        <end position="114"/>
    </location>
</feature>
<feature type="region of interest" description="Basic motif" evidence="2">
    <location>
        <begin position="51"/>
        <end position="76"/>
    </location>
</feature>
<feature type="region of interest" description="Leucine-zipper" evidence="2">
    <location>
        <begin position="79"/>
        <end position="93"/>
    </location>
</feature>
<feature type="region of interest" description="Disordered" evidence="3">
    <location>
        <begin position="140"/>
        <end position="172"/>
    </location>
</feature>
<feature type="compositionally biased region" description="Pro residues" evidence="3">
    <location>
        <begin position="145"/>
        <end position="172"/>
    </location>
</feature>
<accession>A7YY73</accession>
<keyword id="KW-0238">DNA-binding</keyword>
<keyword id="KW-0539">Nucleus</keyword>
<keyword id="KW-1185">Reference proteome</keyword>
<keyword id="KW-0678">Repressor</keyword>
<keyword id="KW-0346">Stress response</keyword>
<keyword id="KW-0804">Transcription</keyword>
<keyword id="KW-0805">Transcription regulation</keyword>
<reference key="1">
    <citation type="submission" date="2007-07" db="EMBL/GenBank/DDBJ databases">
        <authorList>
            <consortium name="NIH - Mammalian Gene Collection (MGC) project"/>
        </authorList>
    </citation>
    <scope>NUCLEOTIDE SEQUENCE [LARGE SCALE MRNA]</scope>
    <source>
        <strain>Hereford</strain>
        <tissue>Ascending colon</tissue>
    </source>
</reference>
<sequence length="172" mass="18231">MSVDPLSSKALKIKRELSENTPHLSDEALMGLSVRELNRHLRGLSAEEVTRLKQRRRTLKNRGYAASCRVKRVCQKEELQKQKSELEREVDKLARENAAMRLELDALRGKCEALQGFARSVAAARGPAALVAPASVITIVKSAPSPGPGPAPGPGPASGPGPAPGPAPAACS</sequence>
<organism>
    <name type="scientific">Bos taurus</name>
    <name type="common">Bovine</name>
    <dbReference type="NCBI Taxonomy" id="9913"/>
    <lineage>
        <taxon>Eukaryota</taxon>
        <taxon>Metazoa</taxon>
        <taxon>Chordata</taxon>
        <taxon>Craniata</taxon>
        <taxon>Vertebrata</taxon>
        <taxon>Euteleostomi</taxon>
        <taxon>Mammalia</taxon>
        <taxon>Eutheria</taxon>
        <taxon>Laurasiatheria</taxon>
        <taxon>Artiodactyla</taxon>
        <taxon>Ruminantia</taxon>
        <taxon>Pecora</taxon>
        <taxon>Bovidae</taxon>
        <taxon>Bovinae</taxon>
        <taxon>Bos</taxon>
    </lineage>
</organism>
<protein>
    <recommendedName>
        <fullName>Transcription factor MafF</fullName>
    </recommendedName>
    <alternativeName>
        <fullName>V-maf musculoaponeurotic fibrosarcoma oncogene homolog F</fullName>
    </alternativeName>
</protein>
<gene>
    <name type="primary">MAFF</name>
</gene>
<name>MAFF_BOVIN</name>
<dbReference type="EMBL" id="BC151584">
    <property type="protein sequence ID" value="AAI51585.1"/>
    <property type="molecule type" value="mRNA"/>
</dbReference>
<dbReference type="RefSeq" id="NP_001096770.1">
    <property type="nucleotide sequence ID" value="NM_001103300.1"/>
</dbReference>
<dbReference type="RefSeq" id="XP_024847998.1">
    <property type="nucleotide sequence ID" value="XM_024992230.2"/>
</dbReference>
<dbReference type="SMR" id="A7YY73"/>
<dbReference type="FunCoup" id="A7YY73">
    <property type="interactions" value="62"/>
</dbReference>
<dbReference type="STRING" id="9913.ENSBTAP00000028574"/>
<dbReference type="PaxDb" id="9913-ENSBTAP00000028574"/>
<dbReference type="Ensembl" id="ENSBTAT00000028574.7">
    <property type="protein sequence ID" value="ENSBTAP00000028574.5"/>
    <property type="gene ID" value="ENSBTAG00000021435.7"/>
</dbReference>
<dbReference type="GeneID" id="617914"/>
<dbReference type="KEGG" id="bta:617914"/>
<dbReference type="CTD" id="23764"/>
<dbReference type="VEuPathDB" id="HostDB:ENSBTAG00000021435"/>
<dbReference type="VGNC" id="VGNC:31140">
    <property type="gene designation" value="MAFF"/>
</dbReference>
<dbReference type="eggNOG" id="KOG4196">
    <property type="taxonomic scope" value="Eukaryota"/>
</dbReference>
<dbReference type="GeneTree" id="ENSGT00940000161112"/>
<dbReference type="HOGENOM" id="CLU_112948_0_1_1"/>
<dbReference type="InParanoid" id="A7YY73"/>
<dbReference type="OMA" id="CDFQAPL"/>
<dbReference type="OrthoDB" id="5974330at2759"/>
<dbReference type="TreeFam" id="TF325689"/>
<dbReference type="Reactome" id="R-BTA-983231">
    <property type="pathway name" value="Factors involved in megakaryocyte development and platelet production"/>
</dbReference>
<dbReference type="Proteomes" id="UP000009136">
    <property type="component" value="Chromosome 5"/>
</dbReference>
<dbReference type="Bgee" id="ENSBTAG00000021435">
    <property type="expression patterns" value="Expressed in gluteus medius and 102 other cell types or tissues"/>
</dbReference>
<dbReference type="GO" id="GO:0005739">
    <property type="term" value="C:mitochondrion"/>
    <property type="evidence" value="ECO:0007669"/>
    <property type="project" value="Ensembl"/>
</dbReference>
<dbReference type="GO" id="GO:0005654">
    <property type="term" value="C:nucleoplasm"/>
    <property type="evidence" value="ECO:0007669"/>
    <property type="project" value="Ensembl"/>
</dbReference>
<dbReference type="GO" id="GO:0005634">
    <property type="term" value="C:nucleus"/>
    <property type="evidence" value="ECO:0000318"/>
    <property type="project" value="GO_Central"/>
</dbReference>
<dbReference type="GO" id="GO:0090575">
    <property type="term" value="C:RNA polymerase II transcription regulator complex"/>
    <property type="evidence" value="ECO:0007669"/>
    <property type="project" value="Ensembl"/>
</dbReference>
<dbReference type="GO" id="GO:0001228">
    <property type="term" value="F:DNA-binding transcription activator activity, RNA polymerase II-specific"/>
    <property type="evidence" value="ECO:0007669"/>
    <property type="project" value="Ensembl"/>
</dbReference>
<dbReference type="GO" id="GO:0000981">
    <property type="term" value="F:DNA-binding transcription factor activity, RNA polymerase II-specific"/>
    <property type="evidence" value="ECO:0000318"/>
    <property type="project" value="GO_Central"/>
</dbReference>
<dbReference type="GO" id="GO:0000978">
    <property type="term" value="F:RNA polymerase II cis-regulatory region sequence-specific DNA binding"/>
    <property type="evidence" value="ECO:0000318"/>
    <property type="project" value="GO_Central"/>
</dbReference>
<dbReference type="GO" id="GO:0001701">
    <property type="term" value="P:in utero embryonic development"/>
    <property type="evidence" value="ECO:0007669"/>
    <property type="project" value="Ensembl"/>
</dbReference>
<dbReference type="GO" id="GO:0045604">
    <property type="term" value="P:regulation of epidermal cell differentiation"/>
    <property type="evidence" value="ECO:0000318"/>
    <property type="project" value="GO_Central"/>
</dbReference>
<dbReference type="GO" id="GO:0006357">
    <property type="term" value="P:regulation of transcription by RNA polymerase II"/>
    <property type="evidence" value="ECO:0000318"/>
    <property type="project" value="GO_Central"/>
</dbReference>
<dbReference type="GO" id="GO:0035914">
    <property type="term" value="P:skeletal muscle cell differentiation"/>
    <property type="evidence" value="ECO:0007669"/>
    <property type="project" value="Ensembl"/>
</dbReference>
<dbReference type="CDD" id="cd14717">
    <property type="entry name" value="bZIP_Maf_small"/>
    <property type="match status" value="1"/>
</dbReference>
<dbReference type="FunFam" id="1.20.5.170:FF:000011">
    <property type="entry name" value="Transcription factor MafG, putative"/>
    <property type="match status" value="1"/>
</dbReference>
<dbReference type="Gene3D" id="1.20.5.170">
    <property type="match status" value="1"/>
</dbReference>
<dbReference type="InterPro" id="IPR004827">
    <property type="entry name" value="bZIP"/>
</dbReference>
<dbReference type="InterPro" id="IPR004826">
    <property type="entry name" value="bZIP_Maf"/>
</dbReference>
<dbReference type="InterPro" id="IPR046347">
    <property type="entry name" value="bZIP_sf"/>
</dbReference>
<dbReference type="InterPro" id="IPR008917">
    <property type="entry name" value="TF_DNA-bd_sf"/>
</dbReference>
<dbReference type="InterPro" id="IPR024874">
    <property type="entry name" value="Transcription_factor_Maf_fam"/>
</dbReference>
<dbReference type="PANTHER" id="PTHR10129">
    <property type="entry name" value="TRANSCRIPTION FACTOR MAF"/>
    <property type="match status" value="1"/>
</dbReference>
<dbReference type="PANTHER" id="PTHR10129:SF25">
    <property type="entry name" value="TRANSCRIPTION FACTOR MAFF"/>
    <property type="match status" value="1"/>
</dbReference>
<dbReference type="Pfam" id="PF03131">
    <property type="entry name" value="bZIP_Maf"/>
    <property type="match status" value="1"/>
</dbReference>
<dbReference type="SMART" id="SM00338">
    <property type="entry name" value="BRLZ"/>
    <property type="match status" value="1"/>
</dbReference>
<dbReference type="SUPFAM" id="SSF47454">
    <property type="entry name" value="A DNA-binding domain in eukaryotic transcription factors"/>
    <property type="match status" value="1"/>
</dbReference>
<dbReference type="SUPFAM" id="SSF57959">
    <property type="entry name" value="Leucine zipper domain"/>
    <property type="match status" value="1"/>
</dbReference>
<dbReference type="PROSITE" id="PS50217">
    <property type="entry name" value="BZIP"/>
    <property type="match status" value="1"/>
</dbReference>
<comment type="function">
    <text evidence="1">Since they lack a putative transactivation domain, the small Mafs behave as transcriptional repressors when they dimerize among themselves. However, they seem to serve as transcriptional activators by dimerizing with other (usually larger) basic-zipper proteins, such as NFE2L1/NRF1, and recruiting them to specific DNA-binding sites. Interacts with the upstream promoter region of the oxytocin receptor gene. May be a transcriptional enhancer in the up-regulation of the oxytocin receptor gene at parturition.</text>
</comment>
<comment type="subunit">
    <text evidence="1">Monomer and homo- or heterodimer. Interacts with MIP. Forms high affinity heterodimers with members of the CNC-bZIP family such as NFE2L1/NRF1.</text>
</comment>
<comment type="subcellular location">
    <subcellularLocation>
        <location evidence="2">Nucleus</location>
    </subcellularLocation>
</comment>
<comment type="similarity">
    <text evidence="4">Belongs to the bZIP family. Maf subfamily.</text>
</comment>
<proteinExistence type="evidence at transcript level"/>